<feature type="signal peptide" evidence="1">
    <location>
        <begin position="1"/>
        <end position="21"/>
    </location>
</feature>
<feature type="chain" id="PRO_0000024541" description="Histidine-rich protein PFHRP-III">
    <location>
        <begin position="22"/>
        <end position="241"/>
    </location>
</feature>
<feature type="region of interest" description="Disordered" evidence="2">
    <location>
        <begin position="52"/>
        <end position="145"/>
    </location>
</feature>
<feature type="region of interest" description="Disordered" evidence="2">
    <location>
        <begin position="195"/>
        <end position="241"/>
    </location>
</feature>
<feature type="compositionally biased region" description="Basic and acidic residues" evidence="2">
    <location>
        <begin position="52"/>
        <end position="76"/>
    </location>
</feature>
<feature type="compositionally biased region" description="Low complexity" evidence="2">
    <location>
        <begin position="84"/>
        <end position="145"/>
    </location>
</feature>
<feature type="compositionally biased region" description="Basic and acidic residues" evidence="2">
    <location>
        <begin position="195"/>
        <end position="231"/>
    </location>
</feature>
<accession>P05228</accession>
<evidence type="ECO:0000255" key="1"/>
<evidence type="ECO:0000256" key="2">
    <source>
        <dbReference type="SAM" id="MobiDB-lite"/>
    </source>
</evidence>
<name>HRP2_PLAFA</name>
<protein>
    <recommendedName>
        <fullName>Histidine-rich protein PFHRP-III</fullName>
    </recommendedName>
</protein>
<dbReference type="EMBL" id="K03509">
    <property type="status" value="NOT_ANNOTATED_CDS"/>
    <property type="molecule type" value="mRNA"/>
</dbReference>
<dbReference type="EMBL" id="M13987">
    <property type="protein sequence ID" value="AAA29617.1"/>
    <property type="molecule type" value="Genomic_DNA"/>
</dbReference>
<dbReference type="PIR" id="B25942">
    <property type="entry name" value="B25942"/>
</dbReference>
<dbReference type="InterPro" id="IPR008779">
    <property type="entry name" value="Plasmodium_HRP"/>
</dbReference>
<dbReference type="Pfam" id="PF05403">
    <property type="entry name" value="Plasmodium_HRP"/>
    <property type="match status" value="1"/>
</dbReference>
<organism>
    <name type="scientific">Plasmodium falciparum</name>
    <dbReference type="NCBI Taxonomy" id="5833"/>
    <lineage>
        <taxon>Eukaryota</taxon>
        <taxon>Sar</taxon>
        <taxon>Alveolata</taxon>
        <taxon>Apicomplexa</taxon>
        <taxon>Aconoidasida</taxon>
        <taxon>Haemosporida</taxon>
        <taxon>Plasmodiidae</taxon>
        <taxon>Plasmodium</taxon>
        <taxon>Plasmodium (Laverania)</taxon>
    </lineage>
</organism>
<proteinExistence type="evidence at transcript level"/>
<reference key="1">
    <citation type="journal article" date="1986" name="Proc. Natl. Acad. Sci. U.S.A.">
        <title>Homologous genes encode two distinct histidine-rich proteins in a cloned isolate of Plasmodium falciparum.</title>
        <authorList>
            <person name="Wellems T.E."/>
            <person name="Howard R.J."/>
        </authorList>
    </citation>
    <scope>NUCLEOTIDE SEQUENCE [GENOMIC DNA / MRNA]</scope>
</reference>
<keyword id="KW-0461">Malaria</keyword>
<keyword id="KW-0677">Repeat</keyword>
<keyword id="KW-0732">Signal</keyword>
<sequence>MVSFSKNKVLSAAVFASVLLLDNNNSEFNNNLFSKNAKGLNSNKRLLHESQAHAGDAHHAHHVADAHHAHHVADAHHAHHAANAHHAANAHHAANAHHAANAHHAANAHHAANAHHAANAHHAANAHHAANAHHAANAHHAANAHHAANAHHAANAHHAADANHGFHFNLHDNNSHTLHHAKANACFDDSHHDDAHHDGAHHDDAHHDGAHHDDAHHDGAHHDGAHHDGAHHNATTHHLHH</sequence>